<keyword id="KW-0067">ATP-binding</keyword>
<keyword id="KW-1003">Cell membrane</keyword>
<keyword id="KW-0378">Hydrolase</keyword>
<keyword id="KW-0472">Membrane</keyword>
<keyword id="KW-0479">Metal-binding</keyword>
<keyword id="KW-0482">Metalloprotease</keyword>
<keyword id="KW-0547">Nucleotide-binding</keyword>
<keyword id="KW-0645">Protease</keyword>
<keyword id="KW-1185">Reference proteome</keyword>
<keyword id="KW-0812">Transmembrane</keyword>
<keyword id="KW-1133">Transmembrane helix</keyword>
<keyword id="KW-0862">Zinc</keyword>
<feature type="chain" id="PRO_0000426746" description="ATP-dependent zinc metalloprotease FtsH">
    <location>
        <begin position="1"/>
        <end position="760"/>
    </location>
</feature>
<feature type="topological domain" description="Cytoplasmic" evidence="1">
    <location>
        <begin position="1"/>
        <end position="5"/>
    </location>
</feature>
<feature type="transmembrane region" description="Helical" evidence="1">
    <location>
        <begin position="6"/>
        <end position="26"/>
    </location>
</feature>
<feature type="topological domain" description="Extracellular" evidence="1">
    <location>
        <begin position="27"/>
        <end position="110"/>
    </location>
</feature>
<feature type="transmembrane region" description="Helical" evidence="1">
    <location>
        <begin position="111"/>
        <end position="131"/>
    </location>
</feature>
<feature type="topological domain" description="Cytoplasmic" evidence="1">
    <location>
        <begin position="132"/>
        <end position="760"/>
    </location>
</feature>
<feature type="region of interest" description="Disordered" evidence="2">
    <location>
        <begin position="616"/>
        <end position="760"/>
    </location>
</feature>
<feature type="compositionally biased region" description="Low complexity" evidence="2">
    <location>
        <begin position="650"/>
        <end position="669"/>
    </location>
</feature>
<feature type="compositionally biased region" description="Acidic residues" evidence="2">
    <location>
        <begin position="740"/>
        <end position="750"/>
    </location>
</feature>
<feature type="active site" evidence="1">
    <location>
        <position position="426"/>
    </location>
</feature>
<feature type="binding site" evidence="1">
    <location>
        <begin position="203"/>
        <end position="210"/>
    </location>
    <ligand>
        <name>ATP</name>
        <dbReference type="ChEBI" id="CHEBI:30616"/>
    </ligand>
</feature>
<feature type="binding site" evidence="1">
    <location>
        <position position="425"/>
    </location>
    <ligand>
        <name>Zn(2+)</name>
        <dbReference type="ChEBI" id="CHEBI:29105"/>
        <note>catalytic</note>
    </ligand>
</feature>
<feature type="binding site" evidence="1">
    <location>
        <position position="429"/>
    </location>
    <ligand>
        <name>Zn(2+)</name>
        <dbReference type="ChEBI" id="CHEBI:29105"/>
        <note>catalytic</note>
    </ligand>
</feature>
<feature type="binding site" evidence="1">
    <location>
        <position position="501"/>
    </location>
    <ligand>
        <name>Zn(2+)</name>
        <dbReference type="ChEBI" id="CHEBI:29105"/>
        <note>catalytic</note>
    </ligand>
</feature>
<organism>
    <name type="scientific">Mycobacterium tuberculosis (strain CDC 1551 / Oshkosh)</name>
    <dbReference type="NCBI Taxonomy" id="83331"/>
    <lineage>
        <taxon>Bacteria</taxon>
        <taxon>Bacillati</taxon>
        <taxon>Actinomycetota</taxon>
        <taxon>Actinomycetes</taxon>
        <taxon>Mycobacteriales</taxon>
        <taxon>Mycobacteriaceae</taxon>
        <taxon>Mycobacterium</taxon>
        <taxon>Mycobacterium tuberculosis complex</taxon>
    </lineage>
</organism>
<comment type="function">
    <text evidence="1">Acts as a processive, ATP-dependent zinc metallopeptidase for both cytoplasmic and membrane proteins. Plays a role in the quality control of integral membrane proteins.</text>
</comment>
<comment type="cofactor">
    <cofactor evidence="1">
        <name>Zn(2+)</name>
        <dbReference type="ChEBI" id="CHEBI:29105"/>
    </cofactor>
    <text evidence="1">Binds 1 zinc ion per subunit.</text>
</comment>
<comment type="subunit">
    <text evidence="1">Homohexamer.</text>
</comment>
<comment type="subcellular location">
    <subcellularLocation>
        <location evidence="1">Cell membrane</location>
        <topology evidence="1">Multi-pass membrane protein</topology>
        <orientation evidence="1">Cytoplasmic side</orientation>
    </subcellularLocation>
</comment>
<comment type="similarity">
    <text evidence="1">In the central section; belongs to the AAA ATPase family.</text>
</comment>
<comment type="similarity">
    <text evidence="1">In the C-terminal section; belongs to the peptidase M41 family.</text>
</comment>
<sequence>MNRKNVTRTITAIAVVVLLGWSFFYFSDDTRGYKPVDTSVAITQINGDNVKSAQIDDREQQLRLILKKGNNETDGSEKVITKYPTGYAVDLFNALSAKNAKVSTVVNQGSILGELLVYVLPLLLLVGLFVMFSRMQGGARMGFGFGKSRAKQLSKDMPKTTFADVAGVDEAVEELYEIKDFLQNPSRYQALGAKIPKGVLLYGPPGTGKTLLARAVAGEAGVPFFTISGSDFVEMFVGVGASRVRDLFEQAKQNSPCIIFVDEIDAVGRQRGAGLGGGHDEREQTLNQLLVEMDGFGDRAGVILIAATNRPDILDPALLRPGRFDRQIPVSNPDLAGRRAVLRVHSKGKPMAADADLDGLAKRTVGMTGADLANVINEAALLTARENGTIITGPALEEAVDRVIGGPRRKGRIISEQEKKITAYHEGGHTLAAWAMPDIEPIYKVTILARGRTGGHAVAVPEEDKGLRTRSEMIAQLVFAMGGRAAEELVFREPTTGAVSDIEQATKIARSMVTEFGMSSKLGAVKYGSEHGDPFLGRTMGTQPDYSHEVAREIDEEVRKLIEAAHTEAWEILTEYRDVLDTLAGELLEKETLHRPELESIFADVEKRPRLTMFDDFGGRIPSDKPPIKTPGELAIERGEPWPQPVPEPAFKAAIAQATQAAEAARSDAGQTGHGANGSPAGTHRSGDRQYGSTQPDYGAPAGWHAPGWPPRSSHRPSYSGEPAPTYPGQPYPTGQADPGSDESSAEQDDEVSRTKPAHG</sequence>
<evidence type="ECO:0000255" key="1">
    <source>
        <dbReference type="HAMAP-Rule" id="MF_01458"/>
    </source>
</evidence>
<evidence type="ECO:0000256" key="2">
    <source>
        <dbReference type="SAM" id="MobiDB-lite"/>
    </source>
</evidence>
<accession>P9WQN2</accession>
<accession>L0TD18</accession>
<accession>P0A4V8</accession>
<accession>P0C5C0</accession>
<accession>P96942</accession>
<protein>
    <recommendedName>
        <fullName evidence="1">ATP-dependent zinc metalloprotease FtsH</fullName>
        <ecNumber evidence="1">3.4.24.-</ecNumber>
    </recommendedName>
</protein>
<gene>
    <name evidence="1" type="primary">ftsH</name>
    <name type="ordered locus">MT3714</name>
</gene>
<name>FTSH_MYCTO</name>
<reference key="1">
    <citation type="journal article" date="2002" name="J. Bacteriol.">
        <title>Whole-genome comparison of Mycobacterium tuberculosis clinical and laboratory strains.</title>
        <authorList>
            <person name="Fleischmann R.D."/>
            <person name="Alland D."/>
            <person name="Eisen J.A."/>
            <person name="Carpenter L."/>
            <person name="White O."/>
            <person name="Peterson J.D."/>
            <person name="DeBoy R.T."/>
            <person name="Dodson R.J."/>
            <person name="Gwinn M.L."/>
            <person name="Haft D.H."/>
            <person name="Hickey E.K."/>
            <person name="Kolonay J.F."/>
            <person name="Nelson W.C."/>
            <person name="Umayam L.A."/>
            <person name="Ermolaeva M.D."/>
            <person name="Salzberg S.L."/>
            <person name="Delcher A."/>
            <person name="Utterback T.R."/>
            <person name="Weidman J.F."/>
            <person name="Khouri H.M."/>
            <person name="Gill J."/>
            <person name="Mikula A."/>
            <person name="Bishai W."/>
            <person name="Jacobs W.R. Jr."/>
            <person name="Venter J.C."/>
            <person name="Fraser C.M."/>
        </authorList>
    </citation>
    <scope>NUCLEOTIDE SEQUENCE [LARGE SCALE GENOMIC DNA]</scope>
    <source>
        <strain>CDC 1551 / Oshkosh</strain>
    </source>
</reference>
<proteinExistence type="inferred from homology"/>
<dbReference type="EC" id="3.4.24.-" evidence="1"/>
<dbReference type="EMBL" id="AE000516">
    <property type="protein sequence ID" value="AAK48073.1"/>
    <property type="molecule type" value="Genomic_DNA"/>
</dbReference>
<dbReference type="PIR" id="C70956">
    <property type="entry name" value="C70956"/>
</dbReference>
<dbReference type="RefSeq" id="WP_003917823.1">
    <property type="nucleotide sequence ID" value="NZ_KK341227.1"/>
</dbReference>
<dbReference type="SMR" id="P9WQN2"/>
<dbReference type="MEROPS" id="M41.015"/>
<dbReference type="KEGG" id="mtc:MT3714"/>
<dbReference type="PATRIC" id="fig|83331.31.peg.3998"/>
<dbReference type="HOGENOM" id="CLU_000688_16_1_11"/>
<dbReference type="Proteomes" id="UP000001020">
    <property type="component" value="Chromosome"/>
</dbReference>
<dbReference type="GO" id="GO:0005886">
    <property type="term" value="C:plasma membrane"/>
    <property type="evidence" value="ECO:0007669"/>
    <property type="project" value="UniProtKB-SubCell"/>
</dbReference>
<dbReference type="GO" id="GO:0005524">
    <property type="term" value="F:ATP binding"/>
    <property type="evidence" value="ECO:0007669"/>
    <property type="project" value="UniProtKB-UniRule"/>
</dbReference>
<dbReference type="GO" id="GO:0016887">
    <property type="term" value="F:ATP hydrolysis activity"/>
    <property type="evidence" value="ECO:0007669"/>
    <property type="project" value="UniProtKB-UniRule"/>
</dbReference>
<dbReference type="GO" id="GO:0004176">
    <property type="term" value="F:ATP-dependent peptidase activity"/>
    <property type="evidence" value="ECO:0007669"/>
    <property type="project" value="InterPro"/>
</dbReference>
<dbReference type="GO" id="GO:0004222">
    <property type="term" value="F:metalloendopeptidase activity"/>
    <property type="evidence" value="ECO:0007669"/>
    <property type="project" value="InterPro"/>
</dbReference>
<dbReference type="GO" id="GO:0008270">
    <property type="term" value="F:zinc ion binding"/>
    <property type="evidence" value="ECO:0007669"/>
    <property type="project" value="UniProtKB-UniRule"/>
</dbReference>
<dbReference type="GO" id="GO:0030163">
    <property type="term" value="P:protein catabolic process"/>
    <property type="evidence" value="ECO:0007669"/>
    <property type="project" value="UniProtKB-UniRule"/>
</dbReference>
<dbReference type="GO" id="GO:0006508">
    <property type="term" value="P:proteolysis"/>
    <property type="evidence" value="ECO:0007669"/>
    <property type="project" value="UniProtKB-KW"/>
</dbReference>
<dbReference type="CDD" id="cd19501">
    <property type="entry name" value="RecA-like_FtsH"/>
    <property type="match status" value="1"/>
</dbReference>
<dbReference type="FunFam" id="1.10.8.60:FF:000001">
    <property type="entry name" value="ATP-dependent zinc metalloprotease FtsH"/>
    <property type="match status" value="1"/>
</dbReference>
<dbReference type="FunFam" id="1.20.58.760:FF:000002">
    <property type="entry name" value="ATP-dependent zinc metalloprotease FtsH"/>
    <property type="match status" value="1"/>
</dbReference>
<dbReference type="FunFam" id="3.40.50.300:FF:000001">
    <property type="entry name" value="ATP-dependent zinc metalloprotease FtsH"/>
    <property type="match status" value="1"/>
</dbReference>
<dbReference type="Gene3D" id="1.10.8.60">
    <property type="match status" value="1"/>
</dbReference>
<dbReference type="Gene3D" id="3.40.50.300">
    <property type="entry name" value="P-loop containing nucleotide triphosphate hydrolases"/>
    <property type="match status" value="1"/>
</dbReference>
<dbReference type="Gene3D" id="1.20.58.760">
    <property type="entry name" value="Peptidase M41"/>
    <property type="match status" value="1"/>
</dbReference>
<dbReference type="HAMAP" id="MF_01458">
    <property type="entry name" value="FtsH"/>
    <property type="match status" value="1"/>
</dbReference>
<dbReference type="InterPro" id="IPR003593">
    <property type="entry name" value="AAA+_ATPase"/>
</dbReference>
<dbReference type="InterPro" id="IPR041569">
    <property type="entry name" value="AAA_lid_3"/>
</dbReference>
<dbReference type="InterPro" id="IPR003959">
    <property type="entry name" value="ATPase_AAA_core"/>
</dbReference>
<dbReference type="InterPro" id="IPR003960">
    <property type="entry name" value="ATPase_AAA_CS"/>
</dbReference>
<dbReference type="InterPro" id="IPR005936">
    <property type="entry name" value="FtsH"/>
</dbReference>
<dbReference type="InterPro" id="IPR027417">
    <property type="entry name" value="P-loop_NTPase"/>
</dbReference>
<dbReference type="InterPro" id="IPR011546">
    <property type="entry name" value="Pept_M41_FtsH_extracell"/>
</dbReference>
<dbReference type="InterPro" id="IPR000642">
    <property type="entry name" value="Peptidase_M41"/>
</dbReference>
<dbReference type="InterPro" id="IPR037219">
    <property type="entry name" value="Peptidase_M41-like"/>
</dbReference>
<dbReference type="NCBIfam" id="TIGR01241">
    <property type="entry name" value="FtsH_fam"/>
    <property type="match status" value="1"/>
</dbReference>
<dbReference type="PANTHER" id="PTHR23076:SF97">
    <property type="entry name" value="ATP-DEPENDENT ZINC METALLOPROTEASE YME1L1"/>
    <property type="match status" value="1"/>
</dbReference>
<dbReference type="PANTHER" id="PTHR23076">
    <property type="entry name" value="METALLOPROTEASE M41 FTSH"/>
    <property type="match status" value="1"/>
</dbReference>
<dbReference type="Pfam" id="PF00004">
    <property type="entry name" value="AAA"/>
    <property type="match status" value="1"/>
</dbReference>
<dbReference type="Pfam" id="PF17862">
    <property type="entry name" value="AAA_lid_3"/>
    <property type="match status" value="1"/>
</dbReference>
<dbReference type="Pfam" id="PF06480">
    <property type="entry name" value="FtsH_ext"/>
    <property type="match status" value="1"/>
</dbReference>
<dbReference type="Pfam" id="PF01434">
    <property type="entry name" value="Peptidase_M41"/>
    <property type="match status" value="1"/>
</dbReference>
<dbReference type="SMART" id="SM00382">
    <property type="entry name" value="AAA"/>
    <property type="match status" value="1"/>
</dbReference>
<dbReference type="SUPFAM" id="SSF140990">
    <property type="entry name" value="FtsH protease domain-like"/>
    <property type="match status" value="1"/>
</dbReference>
<dbReference type="SUPFAM" id="SSF52540">
    <property type="entry name" value="P-loop containing nucleoside triphosphate hydrolases"/>
    <property type="match status" value="1"/>
</dbReference>
<dbReference type="PROSITE" id="PS00674">
    <property type="entry name" value="AAA"/>
    <property type="match status" value="1"/>
</dbReference>